<accession>Q9JXF5</accession>
<gene>
    <name evidence="1" type="primary">thiG</name>
    <name type="ordered locus">NMB2071</name>
</gene>
<proteinExistence type="inferred from homology"/>
<keyword id="KW-0963">Cytoplasm</keyword>
<keyword id="KW-1185">Reference proteome</keyword>
<keyword id="KW-0704">Schiff base</keyword>
<keyword id="KW-0784">Thiamine biosynthesis</keyword>
<keyword id="KW-0808">Transferase</keyword>
<feature type="chain" id="PRO_0000162835" description="Thiazole synthase">
    <location>
        <begin position="1"/>
        <end position="262"/>
    </location>
</feature>
<feature type="region of interest" description="Disordered" evidence="2">
    <location>
        <begin position="243"/>
        <end position="262"/>
    </location>
</feature>
<feature type="active site" description="Schiff-base intermediate with DXP" evidence="1">
    <location>
        <position position="97"/>
    </location>
</feature>
<feature type="binding site" evidence="1">
    <location>
        <position position="158"/>
    </location>
    <ligand>
        <name>1-deoxy-D-xylulose 5-phosphate</name>
        <dbReference type="ChEBI" id="CHEBI:57792"/>
    </ligand>
</feature>
<feature type="binding site" evidence="1">
    <location>
        <begin position="185"/>
        <end position="186"/>
    </location>
    <ligand>
        <name>1-deoxy-D-xylulose 5-phosphate</name>
        <dbReference type="ChEBI" id="CHEBI:57792"/>
    </ligand>
</feature>
<feature type="binding site" evidence="1">
    <location>
        <begin position="207"/>
        <end position="208"/>
    </location>
    <ligand>
        <name>1-deoxy-D-xylulose 5-phosphate</name>
        <dbReference type="ChEBI" id="CHEBI:57792"/>
    </ligand>
</feature>
<organism>
    <name type="scientific">Neisseria meningitidis serogroup B (strain ATCC BAA-335 / MC58)</name>
    <dbReference type="NCBI Taxonomy" id="122586"/>
    <lineage>
        <taxon>Bacteria</taxon>
        <taxon>Pseudomonadati</taxon>
        <taxon>Pseudomonadota</taxon>
        <taxon>Betaproteobacteria</taxon>
        <taxon>Neisseriales</taxon>
        <taxon>Neisseriaceae</taxon>
        <taxon>Neisseria</taxon>
    </lineage>
</organism>
<evidence type="ECO:0000255" key="1">
    <source>
        <dbReference type="HAMAP-Rule" id="MF_00443"/>
    </source>
</evidence>
<evidence type="ECO:0000256" key="2">
    <source>
        <dbReference type="SAM" id="MobiDB-lite"/>
    </source>
</evidence>
<comment type="function">
    <text evidence="1">Catalyzes the rearrangement of 1-deoxy-D-xylulose 5-phosphate (DXP) to produce the thiazole phosphate moiety of thiamine. Sulfur is provided by the thiocarboxylate moiety of the carrier protein ThiS. In vitro, sulfur can be provided by H(2)S.</text>
</comment>
<comment type="catalytic activity">
    <reaction evidence="1">
        <text>[ThiS sulfur-carrier protein]-C-terminal-Gly-aminoethanethioate + 2-iminoacetate + 1-deoxy-D-xylulose 5-phosphate = [ThiS sulfur-carrier protein]-C-terminal Gly-Gly + 2-[(2R,5Z)-2-carboxy-4-methylthiazol-5(2H)-ylidene]ethyl phosphate + 2 H2O + H(+)</text>
        <dbReference type="Rhea" id="RHEA:26297"/>
        <dbReference type="Rhea" id="RHEA-COMP:12909"/>
        <dbReference type="Rhea" id="RHEA-COMP:19908"/>
        <dbReference type="ChEBI" id="CHEBI:15377"/>
        <dbReference type="ChEBI" id="CHEBI:15378"/>
        <dbReference type="ChEBI" id="CHEBI:57792"/>
        <dbReference type="ChEBI" id="CHEBI:62899"/>
        <dbReference type="ChEBI" id="CHEBI:77846"/>
        <dbReference type="ChEBI" id="CHEBI:90778"/>
        <dbReference type="ChEBI" id="CHEBI:232372"/>
        <dbReference type="EC" id="2.8.1.10"/>
    </reaction>
</comment>
<comment type="pathway">
    <text evidence="1">Cofactor biosynthesis; thiamine diphosphate biosynthesis.</text>
</comment>
<comment type="subunit">
    <text evidence="1">Homotetramer. Forms heterodimers with either ThiH or ThiS.</text>
</comment>
<comment type="subcellular location">
    <subcellularLocation>
        <location evidence="1">Cytoplasm</location>
    </subcellularLocation>
</comment>
<comment type="similarity">
    <text evidence="1">Belongs to the ThiG family.</text>
</comment>
<sequence>MLTLYGETFPSRLLLGTAAYPTPEILKQSIQTAQPAMITVSLRRAGSGGEAHGQGFWSLLQETGVPVLPNTAGCQSVQEAVTTAQMAREVFETDWIKLELIGDDDTLQPDVFQLVEAAEILIKDGFKVLPYCTEDLIACRRLLDAGCQALMPWAAPIGTGLGAVHAYALNVLRERLPDTPLIIDAGLGLPSQAAQVMEWGFDGVLLNTAVSRSGDPVNMARAFALAVESGRLAFEAGPVEARDKAQASTPTVGQPFWHSAEY</sequence>
<name>THIG_NEIMB</name>
<protein>
    <recommendedName>
        <fullName evidence="1">Thiazole synthase</fullName>
        <ecNumber evidence="1">2.8.1.10</ecNumber>
    </recommendedName>
</protein>
<dbReference type="EC" id="2.8.1.10" evidence="1"/>
<dbReference type="EMBL" id="AE002098">
    <property type="protein sequence ID" value="AAF42390.1"/>
    <property type="molecule type" value="Genomic_DNA"/>
</dbReference>
<dbReference type="PIR" id="F81008">
    <property type="entry name" value="F81008"/>
</dbReference>
<dbReference type="RefSeq" id="NP_275061.1">
    <property type="nucleotide sequence ID" value="NC_003112.2"/>
</dbReference>
<dbReference type="RefSeq" id="WP_002221723.1">
    <property type="nucleotide sequence ID" value="NC_003112.2"/>
</dbReference>
<dbReference type="SMR" id="Q9JXF5"/>
<dbReference type="FunCoup" id="Q9JXF5">
    <property type="interactions" value="323"/>
</dbReference>
<dbReference type="STRING" id="122586.NMB2071"/>
<dbReference type="PaxDb" id="122586-NMB2071"/>
<dbReference type="KEGG" id="nme:NMB2071"/>
<dbReference type="PATRIC" id="fig|122586.8.peg.2651"/>
<dbReference type="HOGENOM" id="CLU_062233_1_0_4"/>
<dbReference type="InParanoid" id="Q9JXF5"/>
<dbReference type="OrthoDB" id="9805935at2"/>
<dbReference type="UniPathway" id="UPA00060"/>
<dbReference type="Proteomes" id="UP000000425">
    <property type="component" value="Chromosome"/>
</dbReference>
<dbReference type="GO" id="GO:1902508">
    <property type="term" value="C:2-iminoacetate synthase complex"/>
    <property type="evidence" value="ECO:0000318"/>
    <property type="project" value="GO_Central"/>
</dbReference>
<dbReference type="GO" id="GO:0005737">
    <property type="term" value="C:cytoplasm"/>
    <property type="evidence" value="ECO:0007669"/>
    <property type="project" value="UniProtKB-SubCell"/>
</dbReference>
<dbReference type="GO" id="GO:1990107">
    <property type="term" value="F:thiazole synthase activity"/>
    <property type="evidence" value="ECO:0007669"/>
    <property type="project" value="UniProtKB-EC"/>
</dbReference>
<dbReference type="GO" id="GO:0009228">
    <property type="term" value="P:thiamine biosynthetic process"/>
    <property type="evidence" value="ECO:0000318"/>
    <property type="project" value="GO_Central"/>
</dbReference>
<dbReference type="GO" id="GO:0009229">
    <property type="term" value="P:thiamine diphosphate biosynthetic process"/>
    <property type="evidence" value="ECO:0000318"/>
    <property type="project" value="GO_Central"/>
</dbReference>
<dbReference type="CDD" id="cd04728">
    <property type="entry name" value="ThiG"/>
    <property type="match status" value="1"/>
</dbReference>
<dbReference type="Gene3D" id="3.20.20.70">
    <property type="entry name" value="Aldolase class I"/>
    <property type="match status" value="1"/>
</dbReference>
<dbReference type="HAMAP" id="MF_00443">
    <property type="entry name" value="ThiG"/>
    <property type="match status" value="1"/>
</dbReference>
<dbReference type="InterPro" id="IPR013785">
    <property type="entry name" value="Aldolase_TIM"/>
</dbReference>
<dbReference type="InterPro" id="IPR033983">
    <property type="entry name" value="Thiazole_synthase_ThiG"/>
</dbReference>
<dbReference type="InterPro" id="IPR008867">
    <property type="entry name" value="ThiG"/>
</dbReference>
<dbReference type="PANTHER" id="PTHR34266">
    <property type="entry name" value="THIAZOLE SYNTHASE"/>
    <property type="match status" value="1"/>
</dbReference>
<dbReference type="PANTHER" id="PTHR34266:SF2">
    <property type="entry name" value="THIAZOLE SYNTHASE"/>
    <property type="match status" value="1"/>
</dbReference>
<dbReference type="Pfam" id="PF05690">
    <property type="entry name" value="ThiG"/>
    <property type="match status" value="1"/>
</dbReference>
<dbReference type="SUPFAM" id="SSF110399">
    <property type="entry name" value="ThiG-like"/>
    <property type="match status" value="1"/>
</dbReference>
<reference key="1">
    <citation type="journal article" date="2000" name="Science">
        <title>Complete genome sequence of Neisseria meningitidis serogroup B strain MC58.</title>
        <authorList>
            <person name="Tettelin H."/>
            <person name="Saunders N.J."/>
            <person name="Heidelberg J.F."/>
            <person name="Jeffries A.C."/>
            <person name="Nelson K.E."/>
            <person name="Eisen J.A."/>
            <person name="Ketchum K.A."/>
            <person name="Hood D.W."/>
            <person name="Peden J.F."/>
            <person name="Dodson R.J."/>
            <person name="Nelson W.C."/>
            <person name="Gwinn M.L."/>
            <person name="DeBoy R.T."/>
            <person name="Peterson J.D."/>
            <person name="Hickey E.K."/>
            <person name="Haft D.H."/>
            <person name="Salzberg S.L."/>
            <person name="White O."/>
            <person name="Fleischmann R.D."/>
            <person name="Dougherty B.A."/>
            <person name="Mason T.M."/>
            <person name="Ciecko A."/>
            <person name="Parksey D.S."/>
            <person name="Blair E."/>
            <person name="Cittone H."/>
            <person name="Clark E.B."/>
            <person name="Cotton M.D."/>
            <person name="Utterback T.R."/>
            <person name="Khouri H.M."/>
            <person name="Qin H."/>
            <person name="Vamathevan J.J."/>
            <person name="Gill J."/>
            <person name="Scarlato V."/>
            <person name="Masignani V."/>
            <person name="Pizza M."/>
            <person name="Grandi G."/>
            <person name="Sun L."/>
            <person name="Smith H.O."/>
            <person name="Fraser C.M."/>
            <person name="Moxon E.R."/>
            <person name="Rappuoli R."/>
            <person name="Venter J.C."/>
        </authorList>
    </citation>
    <scope>NUCLEOTIDE SEQUENCE [LARGE SCALE GENOMIC DNA]</scope>
    <source>
        <strain>ATCC BAA-335 / MC58</strain>
    </source>
</reference>